<reference key="1">
    <citation type="journal article" date="1998" name="Biol. Chem.">
        <title>Molecular cloning and characterization of a novel tissue-specific calpain predominantly expressed in the digestive tract.</title>
        <authorList>
            <person name="Lee H.-J."/>
            <person name="Sorimachi H."/>
            <person name="Jeong S.-Y."/>
            <person name="Ishiura S."/>
            <person name="Suzuki K."/>
        </authorList>
    </citation>
    <scope>NUCLEOTIDE SEQUENCE [MRNA] (ISOFORM 1)</scope>
    <source>
        <tissue>Stomach</tissue>
    </source>
</reference>
<reference key="2">
    <citation type="journal article" date="2000" name="Jpn. J. Cancer Res.">
        <title>Isolation of two novel genes, down-regulated in gastric cancer.</title>
        <authorList>
            <person name="Yoshikawa Y."/>
            <person name="Mukai H."/>
            <person name="Hino F."/>
            <person name="Asada K."/>
            <person name="Kato I."/>
        </authorList>
    </citation>
    <scope>NUCLEOTIDE SEQUENCE [MRNA] (ISOFORM 2)</scope>
</reference>
<reference key="3">
    <citation type="submission" date="2005-01" db="EMBL/GenBank/DDBJ databases">
        <authorList>
            <consortium name="NIEHS SNPs program"/>
        </authorList>
    </citation>
    <scope>NUCLEOTIDE SEQUENCE [GENOMIC DNA]</scope>
    <scope>VARIANTS VAL-102; ARG-122; ASN-164; THR-234; THR-239; TRP-277; GLN-322; GLN-327; LYS-342; TRP-458; TRP-522 AND ILE-611</scope>
</reference>
<reference key="4">
    <citation type="journal article" date="2006" name="Nature">
        <title>The DNA sequence and biological annotation of human chromosome 1.</title>
        <authorList>
            <person name="Gregory S.G."/>
            <person name="Barlow K.F."/>
            <person name="McLay K.E."/>
            <person name="Kaul R."/>
            <person name="Swarbreck D."/>
            <person name="Dunham A."/>
            <person name="Scott C.E."/>
            <person name="Howe K.L."/>
            <person name="Woodfine K."/>
            <person name="Spencer C.C.A."/>
            <person name="Jones M.C."/>
            <person name="Gillson C."/>
            <person name="Searle S."/>
            <person name="Zhou Y."/>
            <person name="Kokocinski F."/>
            <person name="McDonald L."/>
            <person name="Evans R."/>
            <person name="Phillips K."/>
            <person name="Atkinson A."/>
            <person name="Cooper R."/>
            <person name="Jones C."/>
            <person name="Hall R.E."/>
            <person name="Andrews T.D."/>
            <person name="Lloyd C."/>
            <person name="Ainscough R."/>
            <person name="Almeida J.P."/>
            <person name="Ambrose K.D."/>
            <person name="Anderson F."/>
            <person name="Andrew R.W."/>
            <person name="Ashwell R.I.S."/>
            <person name="Aubin K."/>
            <person name="Babbage A.K."/>
            <person name="Bagguley C.L."/>
            <person name="Bailey J."/>
            <person name="Beasley H."/>
            <person name="Bethel G."/>
            <person name="Bird C.P."/>
            <person name="Bray-Allen S."/>
            <person name="Brown J.Y."/>
            <person name="Brown A.J."/>
            <person name="Buckley D."/>
            <person name="Burton J."/>
            <person name="Bye J."/>
            <person name="Carder C."/>
            <person name="Chapman J.C."/>
            <person name="Clark S.Y."/>
            <person name="Clarke G."/>
            <person name="Clee C."/>
            <person name="Cobley V."/>
            <person name="Collier R.E."/>
            <person name="Corby N."/>
            <person name="Coville G.J."/>
            <person name="Davies J."/>
            <person name="Deadman R."/>
            <person name="Dunn M."/>
            <person name="Earthrowl M."/>
            <person name="Ellington A.G."/>
            <person name="Errington H."/>
            <person name="Frankish A."/>
            <person name="Frankland J."/>
            <person name="French L."/>
            <person name="Garner P."/>
            <person name="Garnett J."/>
            <person name="Gay L."/>
            <person name="Ghori M.R.J."/>
            <person name="Gibson R."/>
            <person name="Gilby L.M."/>
            <person name="Gillett W."/>
            <person name="Glithero R.J."/>
            <person name="Grafham D.V."/>
            <person name="Griffiths C."/>
            <person name="Griffiths-Jones S."/>
            <person name="Grocock R."/>
            <person name="Hammond S."/>
            <person name="Harrison E.S.I."/>
            <person name="Hart E."/>
            <person name="Haugen E."/>
            <person name="Heath P.D."/>
            <person name="Holmes S."/>
            <person name="Holt K."/>
            <person name="Howden P.J."/>
            <person name="Hunt A.R."/>
            <person name="Hunt S.E."/>
            <person name="Hunter G."/>
            <person name="Isherwood J."/>
            <person name="James R."/>
            <person name="Johnson C."/>
            <person name="Johnson D."/>
            <person name="Joy A."/>
            <person name="Kay M."/>
            <person name="Kershaw J.K."/>
            <person name="Kibukawa M."/>
            <person name="Kimberley A.M."/>
            <person name="King A."/>
            <person name="Knights A.J."/>
            <person name="Lad H."/>
            <person name="Laird G."/>
            <person name="Lawlor S."/>
            <person name="Leongamornlert D.A."/>
            <person name="Lloyd D.M."/>
            <person name="Loveland J."/>
            <person name="Lovell J."/>
            <person name="Lush M.J."/>
            <person name="Lyne R."/>
            <person name="Martin S."/>
            <person name="Mashreghi-Mohammadi M."/>
            <person name="Matthews L."/>
            <person name="Matthews N.S.W."/>
            <person name="McLaren S."/>
            <person name="Milne S."/>
            <person name="Mistry S."/>
            <person name="Moore M.J.F."/>
            <person name="Nickerson T."/>
            <person name="O'Dell C.N."/>
            <person name="Oliver K."/>
            <person name="Palmeiri A."/>
            <person name="Palmer S.A."/>
            <person name="Parker A."/>
            <person name="Patel D."/>
            <person name="Pearce A.V."/>
            <person name="Peck A.I."/>
            <person name="Pelan S."/>
            <person name="Phelps K."/>
            <person name="Phillimore B.J."/>
            <person name="Plumb R."/>
            <person name="Rajan J."/>
            <person name="Raymond C."/>
            <person name="Rouse G."/>
            <person name="Saenphimmachak C."/>
            <person name="Sehra H.K."/>
            <person name="Sheridan E."/>
            <person name="Shownkeen R."/>
            <person name="Sims S."/>
            <person name="Skuce C.D."/>
            <person name="Smith M."/>
            <person name="Steward C."/>
            <person name="Subramanian S."/>
            <person name="Sycamore N."/>
            <person name="Tracey A."/>
            <person name="Tromans A."/>
            <person name="Van Helmond Z."/>
            <person name="Wall M."/>
            <person name="Wallis J.M."/>
            <person name="White S."/>
            <person name="Whitehead S.L."/>
            <person name="Wilkinson J.E."/>
            <person name="Willey D.L."/>
            <person name="Williams H."/>
            <person name="Wilming L."/>
            <person name="Wray P.W."/>
            <person name="Wu Z."/>
            <person name="Coulson A."/>
            <person name="Vaudin M."/>
            <person name="Sulston J.E."/>
            <person name="Durbin R.M."/>
            <person name="Hubbard T."/>
            <person name="Wooster R."/>
            <person name="Dunham I."/>
            <person name="Carter N.P."/>
            <person name="McVean G."/>
            <person name="Ross M.T."/>
            <person name="Harrow J."/>
            <person name="Olson M.V."/>
            <person name="Beck S."/>
            <person name="Rogers J."/>
            <person name="Bentley D.R."/>
        </authorList>
    </citation>
    <scope>NUCLEOTIDE SEQUENCE [LARGE SCALE GENOMIC DNA]</scope>
</reference>
<reference key="5">
    <citation type="journal article" date="2007" name="J. Mol. Biol.">
        <title>The crystal structures of human calpains 1 and 9 imply diverse mechanisms of action and auto-inhibition.</title>
        <authorList>
            <person name="Davis T.L."/>
            <person name="Walker J.R."/>
            <person name="Finerty P.J. Jr."/>
            <person name="Mackenzie F."/>
            <person name="Newman E.M."/>
            <person name="Dhe-Paganon S."/>
        </authorList>
    </citation>
    <scope>X-RAY CRYSTALLOGRAPHY (2.31 ANGSTROMS) OF 28-347</scope>
    <scope>ACTIVE SITE</scope>
    <scope>CALCIUM-BINDING SITES</scope>
</reference>
<feature type="chain" id="PRO_0000207722" description="Calpain-9">
    <location>
        <begin position="1"/>
        <end position="690"/>
    </location>
</feature>
<feature type="domain" description="Calpain catalytic" evidence="1">
    <location>
        <begin position="42"/>
        <end position="337"/>
    </location>
</feature>
<feature type="domain" description="EF-hand 1" evidence="2">
    <location>
        <begin position="518"/>
        <end position="552"/>
    </location>
</feature>
<feature type="domain" description="EF-hand 2" evidence="2">
    <location>
        <begin position="561"/>
        <end position="589"/>
    </location>
</feature>
<feature type="domain" description="EF-hand 3" evidence="2">
    <location>
        <begin position="591"/>
        <end position="626"/>
    </location>
</feature>
<feature type="region of interest" description="Disordered" evidence="3">
    <location>
        <begin position="1"/>
        <end position="24"/>
    </location>
</feature>
<feature type="region of interest" description="Domain III">
    <location>
        <begin position="338"/>
        <end position="521"/>
    </location>
</feature>
<feature type="region of interest" description="Disordered" evidence="3">
    <location>
        <begin position="498"/>
        <end position="519"/>
    </location>
</feature>
<feature type="region of interest" description="Domain IV">
    <location>
        <begin position="522"/>
        <end position="690"/>
    </location>
</feature>
<feature type="active site" evidence="4">
    <location>
        <position position="97"/>
    </location>
</feature>
<feature type="active site" evidence="4">
    <location>
        <position position="254"/>
    </location>
</feature>
<feature type="active site" evidence="4">
    <location>
        <position position="278"/>
    </location>
</feature>
<feature type="binding site">
    <location>
        <position position="81"/>
    </location>
    <ligand>
        <name>Ca(2+)</name>
        <dbReference type="ChEBI" id="CHEBI:29108"/>
        <label>1</label>
    </ligand>
</feature>
<feature type="binding site">
    <location>
        <position position="83"/>
    </location>
    <ligand>
        <name>Ca(2+)</name>
        <dbReference type="ChEBI" id="CHEBI:29108"/>
        <label>1</label>
    </ligand>
</feature>
<feature type="binding site">
    <location>
        <position position="88"/>
    </location>
    <ligand>
        <name>Ca(2+)</name>
        <dbReference type="ChEBI" id="CHEBI:29108"/>
        <label>1</label>
    </ligand>
</feature>
<feature type="binding site">
    <location>
        <position position="167"/>
    </location>
    <ligand>
        <name>Ca(2+)</name>
        <dbReference type="ChEBI" id="CHEBI:29108"/>
        <label>1</label>
    </ligand>
</feature>
<feature type="binding site">
    <location>
        <position position="284"/>
    </location>
    <ligand>
        <name>Ca(2+)</name>
        <dbReference type="ChEBI" id="CHEBI:29108"/>
        <label>2</label>
    </ligand>
</feature>
<feature type="binding site">
    <location>
        <position position="291"/>
    </location>
    <ligand>
        <name>Ca(2+)</name>
        <dbReference type="ChEBI" id="CHEBI:29108"/>
        <label>2</label>
    </ligand>
</feature>
<feature type="binding site">
    <location>
        <position position="312"/>
    </location>
    <ligand>
        <name>Ca(2+)</name>
        <dbReference type="ChEBI" id="CHEBI:29108"/>
        <label>2</label>
    </ligand>
</feature>
<feature type="binding site">
    <location>
        <position position="314"/>
    </location>
    <ligand>
        <name>Ca(2+)</name>
        <dbReference type="ChEBI" id="CHEBI:29108"/>
        <label>2</label>
    </ligand>
</feature>
<feature type="binding site">
    <location>
        <position position="316"/>
    </location>
    <ligand>
        <name>Ca(2+)</name>
        <dbReference type="ChEBI" id="CHEBI:29108"/>
        <label>2</label>
    </ligand>
</feature>
<feature type="binding site" evidence="2">
    <location>
        <position position="574"/>
    </location>
    <ligand>
        <name>Ca(2+)</name>
        <dbReference type="ChEBI" id="CHEBI:29108"/>
        <label>3</label>
    </ligand>
</feature>
<feature type="binding site" evidence="2">
    <location>
        <position position="576"/>
    </location>
    <ligand>
        <name>Ca(2+)</name>
        <dbReference type="ChEBI" id="CHEBI:29108"/>
        <label>3</label>
    </ligand>
</feature>
<feature type="binding site" evidence="2">
    <location>
        <position position="578"/>
    </location>
    <ligand>
        <name>Ca(2+)</name>
        <dbReference type="ChEBI" id="CHEBI:29108"/>
        <label>3</label>
    </ligand>
</feature>
<feature type="binding site" evidence="2">
    <location>
        <position position="580"/>
    </location>
    <ligand>
        <name>Ca(2+)</name>
        <dbReference type="ChEBI" id="CHEBI:29108"/>
        <label>3</label>
    </ligand>
</feature>
<feature type="binding site" evidence="2">
    <location>
        <position position="585"/>
    </location>
    <ligand>
        <name>Ca(2+)</name>
        <dbReference type="ChEBI" id="CHEBI:29108"/>
        <label>3</label>
    </ligand>
</feature>
<feature type="binding site" evidence="2">
    <location>
        <position position="604"/>
    </location>
    <ligand>
        <name>Ca(2+)</name>
        <dbReference type="ChEBI" id="CHEBI:29108"/>
        <label>4</label>
    </ligand>
</feature>
<feature type="binding site" evidence="2">
    <location>
        <position position="606"/>
    </location>
    <ligand>
        <name>Ca(2+)</name>
        <dbReference type="ChEBI" id="CHEBI:29108"/>
        <label>4</label>
    </ligand>
</feature>
<feature type="binding site" evidence="2">
    <location>
        <position position="608"/>
    </location>
    <ligand>
        <name>Ca(2+)</name>
        <dbReference type="ChEBI" id="CHEBI:29108"/>
        <label>4</label>
    </ligand>
</feature>
<feature type="binding site" evidence="2">
    <location>
        <position position="610"/>
    </location>
    <ligand>
        <name>Ca(2+)</name>
        <dbReference type="ChEBI" id="CHEBI:29108"/>
        <label>4</label>
    </ligand>
</feature>
<feature type="binding site" evidence="2">
    <location>
        <position position="615"/>
    </location>
    <ligand>
        <name>Ca(2+)</name>
        <dbReference type="ChEBI" id="CHEBI:29108"/>
        <label>4</label>
    </ligand>
</feature>
<feature type="splice variant" id="VSP_007553" description="In isoform 2." evidence="6">
    <original>SSPEWRSVGPAEQKRLCHTALDDGEFW</original>
    <variation>R</variation>
    <location>
        <begin position="292"/>
        <end position="318"/>
    </location>
</feature>
<feature type="sequence variant" id="VAR_022188" description="In dbSNP:rs12562749." evidence="5">
    <original>A</original>
    <variation>V</variation>
    <location>
        <position position="102"/>
    </location>
</feature>
<feature type="sequence variant" id="VAR_022189" description="In dbSNP:rs28359608." evidence="5">
    <original>S</original>
    <variation>R</variation>
    <location>
        <position position="122"/>
    </location>
</feature>
<feature type="sequence variant" id="VAR_022190" description="In dbSNP:rs28359632." evidence="5">
    <original>D</original>
    <variation>N</variation>
    <location>
        <position position="164"/>
    </location>
</feature>
<feature type="sequence variant" id="VAR_022191" description="In dbSNP:rs28359644." evidence="5">
    <original>I</original>
    <variation>T</variation>
    <location>
        <position position="234"/>
    </location>
</feature>
<feature type="sequence variant" id="VAR_022192" description="In dbSNP:rs28359647." evidence="5">
    <original>A</original>
    <variation>T</variation>
    <location>
        <position position="239"/>
    </location>
</feature>
<feature type="sequence variant" id="VAR_022193" description="In dbSNP:rs28359655." evidence="5">
    <original>R</original>
    <variation>W</variation>
    <location>
        <position position="277"/>
    </location>
</feature>
<feature type="sequence variant" id="VAR_022194" description="In dbSNP:rs1933631." evidence="5">
    <original>K</original>
    <variation>Q</variation>
    <location>
        <position position="322"/>
    </location>
</feature>
<feature type="sequence variant" id="VAR_022195" description="In dbSNP:rs28359684." evidence="5">
    <original>H</original>
    <variation>Q</variation>
    <location>
        <position position="327"/>
    </location>
</feature>
<feature type="sequence variant" id="VAR_022196" description="In dbSNP:rs16852652." evidence="5">
    <original>E</original>
    <variation>K</variation>
    <location>
        <position position="342"/>
    </location>
</feature>
<feature type="sequence variant" id="VAR_022197" description="In dbSNP:rs28359688." evidence="5">
    <original>R</original>
    <variation>W</variation>
    <location>
        <position position="458"/>
    </location>
</feature>
<feature type="sequence variant" id="VAR_022198" description="In dbSNP:rs12731961." evidence="5">
    <original>R</original>
    <variation>W</variation>
    <location>
        <position position="522"/>
    </location>
</feature>
<feature type="sequence variant" id="VAR_022199" description="In dbSNP:rs16852683." evidence="5">
    <original>M</original>
    <variation>I</variation>
    <location>
        <position position="611"/>
    </location>
</feature>
<feature type="helix" evidence="8">
    <location>
        <begin position="29"/>
        <end position="38"/>
    </location>
</feature>
<feature type="strand" evidence="8">
    <location>
        <begin position="46"/>
        <end position="48"/>
    </location>
</feature>
<feature type="helix" evidence="8">
    <location>
        <begin position="52"/>
        <end position="54"/>
    </location>
</feature>
<feature type="strand" evidence="9">
    <location>
        <begin position="57"/>
        <end position="59"/>
    </location>
</feature>
<feature type="strand" evidence="8">
    <location>
        <begin position="66"/>
        <end position="68"/>
    </location>
</feature>
<feature type="helix" evidence="8">
    <location>
        <begin position="70"/>
        <end position="72"/>
    </location>
</feature>
<feature type="strand" evidence="8">
    <location>
        <begin position="74"/>
        <end position="76"/>
    </location>
</feature>
<feature type="strand" evidence="8">
    <location>
        <begin position="78"/>
        <end position="80"/>
    </location>
</feature>
<feature type="helix" evidence="8">
    <location>
        <begin position="86"/>
        <end position="88"/>
    </location>
</feature>
<feature type="strand" evidence="9">
    <location>
        <begin position="93"/>
        <end position="95"/>
    </location>
</feature>
<feature type="helix" evidence="8">
    <location>
        <begin position="98"/>
        <end position="107"/>
    </location>
</feature>
<feature type="helix" evidence="8">
    <location>
        <begin position="110"/>
        <end position="116"/>
    </location>
</feature>
<feature type="strand" evidence="8">
    <location>
        <begin position="129"/>
        <end position="136"/>
    </location>
</feature>
<feature type="strand" evidence="8">
    <location>
        <begin position="138"/>
        <end position="147"/>
    </location>
</feature>
<feature type="strand" evidence="8">
    <location>
        <begin position="150"/>
        <end position="161"/>
    </location>
</feature>
<feature type="helix" evidence="8">
    <location>
        <begin position="169"/>
        <end position="181"/>
    </location>
</feature>
<feature type="helix" evidence="8">
    <location>
        <begin position="185"/>
        <end position="187"/>
    </location>
</feature>
<feature type="strand" evidence="9">
    <location>
        <begin position="188"/>
        <end position="190"/>
    </location>
</feature>
<feature type="helix" evidence="8">
    <location>
        <begin position="192"/>
        <end position="200"/>
    </location>
</feature>
<feature type="strand" evidence="8">
    <location>
        <begin position="205"/>
        <end position="208"/>
    </location>
</feature>
<feature type="helix" evidence="8">
    <location>
        <begin position="209"/>
        <end position="211"/>
    </location>
</feature>
<feature type="helix" evidence="8">
    <location>
        <begin position="216"/>
        <end position="226"/>
    </location>
</feature>
<feature type="strand" evidence="8">
    <location>
        <begin position="229"/>
        <end position="233"/>
    </location>
</feature>
<feature type="helix" evidence="8">
    <location>
        <begin position="239"/>
        <end position="241"/>
    </location>
</feature>
<feature type="strand" evidence="8">
    <location>
        <begin position="256"/>
        <end position="266"/>
    </location>
</feature>
<feature type="strand" evidence="8">
    <location>
        <begin position="269"/>
        <end position="277"/>
    </location>
</feature>
<feature type="helix" evidence="8">
    <location>
        <begin position="294"/>
        <end position="298"/>
    </location>
</feature>
<feature type="helix" evidence="8">
    <location>
        <begin position="301"/>
        <end position="306"/>
    </location>
</feature>
<feature type="strand" evidence="8">
    <location>
        <begin position="313"/>
        <end position="320"/>
    </location>
</feature>
<feature type="helix" evidence="8">
    <location>
        <begin position="321"/>
        <end position="327"/>
    </location>
</feature>
<feature type="strand" evidence="8">
    <location>
        <begin position="330"/>
        <end position="334"/>
    </location>
</feature>
<proteinExistence type="evidence at protein level"/>
<organism>
    <name type="scientific">Homo sapiens</name>
    <name type="common">Human</name>
    <dbReference type="NCBI Taxonomy" id="9606"/>
    <lineage>
        <taxon>Eukaryota</taxon>
        <taxon>Metazoa</taxon>
        <taxon>Chordata</taxon>
        <taxon>Craniata</taxon>
        <taxon>Vertebrata</taxon>
        <taxon>Euteleostomi</taxon>
        <taxon>Mammalia</taxon>
        <taxon>Eutheria</taxon>
        <taxon>Euarchontoglires</taxon>
        <taxon>Primates</taxon>
        <taxon>Haplorrhini</taxon>
        <taxon>Catarrhini</taxon>
        <taxon>Hominidae</taxon>
        <taxon>Homo</taxon>
    </lineage>
</organism>
<protein>
    <recommendedName>
        <fullName>Calpain-9</fullName>
        <ecNumber>3.4.22.-</ecNumber>
    </recommendedName>
    <alternativeName>
        <fullName>Digestive tract-specific calpain</fullName>
    </alternativeName>
    <alternativeName>
        <fullName>New calpain 4</fullName>
        <shortName>nCL-4</shortName>
    </alternativeName>
    <alternativeName>
        <fullName>Protein CG36</fullName>
    </alternativeName>
</protein>
<accession>O14815</accession>
<accession>B1APS1</accession>
<accession>B1AQI0</accession>
<accession>Q9NS74</accession>
<keyword id="KW-0002">3D-structure</keyword>
<keyword id="KW-0025">Alternative splicing</keyword>
<keyword id="KW-0106">Calcium</keyword>
<keyword id="KW-0378">Hydrolase</keyword>
<keyword id="KW-0479">Metal-binding</keyword>
<keyword id="KW-0645">Protease</keyword>
<keyword id="KW-1267">Proteomics identification</keyword>
<keyword id="KW-1185">Reference proteome</keyword>
<keyword id="KW-0677">Repeat</keyword>
<keyword id="KW-0788">Thiol protease</keyword>
<gene>
    <name type="primary">CAPN9</name>
    <name type="synonym">NCL4</name>
</gene>
<evidence type="ECO:0000255" key="1">
    <source>
        <dbReference type="PROSITE-ProRule" id="PRU00239"/>
    </source>
</evidence>
<evidence type="ECO:0000255" key="2">
    <source>
        <dbReference type="PROSITE-ProRule" id="PRU00448"/>
    </source>
</evidence>
<evidence type="ECO:0000256" key="3">
    <source>
        <dbReference type="SAM" id="MobiDB-lite"/>
    </source>
</evidence>
<evidence type="ECO:0000269" key="4">
    <source>
    </source>
</evidence>
<evidence type="ECO:0000269" key="5">
    <source ref="3"/>
</evidence>
<evidence type="ECO:0000303" key="6">
    <source>
    </source>
</evidence>
<evidence type="ECO:0000305" key="7"/>
<evidence type="ECO:0007829" key="8">
    <source>
        <dbReference type="PDB" id="1ZIV"/>
    </source>
</evidence>
<evidence type="ECO:0007829" key="9">
    <source>
        <dbReference type="PDB" id="2P0R"/>
    </source>
</evidence>
<name>CAN9_HUMAN</name>
<dbReference type="EC" id="3.4.22.-"/>
<dbReference type="EMBL" id="AF022799">
    <property type="protein sequence ID" value="AAB80762.1"/>
    <property type="molecule type" value="mRNA"/>
</dbReference>
<dbReference type="EMBL" id="AB038463">
    <property type="protein sequence ID" value="BAA92137.1"/>
    <property type="molecule type" value="mRNA"/>
</dbReference>
<dbReference type="EMBL" id="AY874864">
    <property type="protein sequence ID" value="AAW49735.1"/>
    <property type="molecule type" value="Genomic_DNA"/>
</dbReference>
<dbReference type="EMBL" id="AL512328">
    <property type="status" value="NOT_ANNOTATED_CDS"/>
    <property type="molecule type" value="Genomic_DNA"/>
</dbReference>
<dbReference type="EMBL" id="FO393421">
    <property type="status" value="NOT_ANNOTATED_CDS"/>
    <property type="molecule type" value="Genomic_DNA"/>
</dbReference>
<dbReference type="CCDS" id="CCDS1586.1">
    <molecule id="O14815-1"/>
</dbReference>
<dbReference type="CCDS" id="CCDS31053.1">
    <molecule id="O14815-2"/>
</dbReference>
<dbReference type="RefSeq" id="NP_001306605.1">
    <property type="nucleotide sequence ID" value="NM_001319676.1"/>
</dbReference>
<dbReference type="RefSeq" id="NP_006606.1">
    <molecule id="O14815-1"/>
    <property type="nucleotide sequence ID" value="NM_006615.3"/>
</dbReference>
<dbReference type="RefSeq" id="NP_057536.1">
    <molecule id="O14815-2"/>
    <property type="nucleotide sequence ID" value="NM_016452.3"/>
</dbReference>
<dbReference type="PDB" id="1ZIV">
    <property type="method" value="X-ray"/>
    <property type="resolution" value="2.31 A"/>
    <property type="chains" value="A=28-347"/>
</dbReference>
<dbReference type="PDB" id="2P0R">
    <property type="method" value="X-ray"/>
    <property type="resolution" value="2.50 A"/>
    <property type="chains" value="A/B=10-340"/>
</dbReference>
<dbReference type="PDBsum" id="1ZIV"/>
<dbReference type="PDBsum" id="2P0R"/>
<dbReference type="SMR" id="O14815"/>
<dbReference type="BioGRID" id="115976">
    <property type="interactions" value="7"/>
</dbReference>
<dbReference type="FunCoup" id="O14815">
    <property type="interactions" value="13"/>
</dbReference>
<dbReference type="STRING" id="9606.ENSP00000271971"/>
<dbReference type="ChEMBL" id="CHEMBL4523126"/>
<dbReference type="MEROPS" id="C02.006"/>
<dbReference type="GlyGen" id="O14815">
    <property type="glycosylation" value="1 site"/>
</dbReference>
<dbReference type="iPTMnet" id="O14815"/>
<dbReference type="PhosphoSitePlus" id="O14815"/>
<dbReference type="BioMuta" id="CAPN9"/>
<dbReference type="jPOST" id="O14815"/>
<dbReference type="MassIVE" id="O14815"/>
<dbReference type="PaxDb" id="9606-ENSP00000271971"/>
<dbReference type="PeptideAtlas" id="O14815"/>
<dbReference type="ProteomicsDB" id="48253">
    <molecule id="O14815-1"/>
</dbReference>
<dbReference type="ProteomicsDB" id="48254">
    <molecule id="O14815-2"/>
</dbReference>
<dbReference type="Antibodypedia" id="20792">
    <property type="antibodies" value="254 antibodies from 31 providers"/>
</dbReference>
<dbReference type="DNASU" id="10753"/>
<dbReference type="Ensembl" id="ENST00000271971.7">
    <molecule id="O14815-1"/>
    <property type="protein sequence ID" value="ENSP00000271971.2"/>
    <property type="gene ID" value="ENSG00000135773.13"/>
</dbReference>
<dbReference type="Ensembl" id="ENST00000354537.1">
    <molecule id="O14815-2"/>
    <property type="protein sequence ID" value="ENSP00000346538.1"/>
    <property type="gene ID" value="ENSG00000135773.13"/>
</dbReference>
<dbReference type="GeneID" id="10753"/>
<dbReference type="KEGG" id="hsa:10753"/>
<dbReference type="MANE-Select" id="ENST00000271971.7">
    <property type="protein sequence ID" value="ENSP00000271971.2"/>
    <property type="RefSeq nucleotide sequence ID" value="NM_006615.3"/>
    <property type="RefSeq protein sequence ID" value="NP_006606.1"/>
</dbReference>
<dbReference type="UCSC" id="uc001htz.2">
    <molecule id="O14815-1"/>
    <property type="organism name" value="human"/>
</dbReference>
<dbReference type="AGR" id="HGNC:1486"/>
<dbReference type="CTD" id="10753"/>
<dbReference type="DisGeNET" id="10753"/>
<dbReference type="GeneCards" id="CAPN9"/>
<dbReference type="HGNC" id="HGNC:1486">
    <property type="gene designation" value="CAPN9"/>
</dbReference>
<dbReference type="HPA" id="ENSG00000135773">
    <property type="expression patterns" value="Tissue enhanced (intestine, stomach)"/>
</dbReference>
<dbReference type="MIM" id="606401">
    <property type="type" value="gene"/>
</dbReference>
<dbReference type="neXtProt" id="NX_O14815"/>
<dbReference type="OpenTargets" id="ENSG00000135773"/>
<dbReference type="PharmGKB" id="PA26066"/>
<dbReference type="VEuPathDB" id="HostDB:ENSG00000135773"/>
<dbReference type="eggNOG" id="KOG0045">
    <property type="taxonomic scope" value="Eukaryota"/>
</dbReference>
<dbReference type="GeneTree" id="ENSGT00940000158966"/>
<dbReference type="HOGENOM" id="CLU_010982_0_3_1"/>
<dbReference type="InParanoid" id="O14815"/>
<dbReference type="OMA" id="IEQTIYS"/>
<dbReference type="OrthoDB" id="424753at2759"/>
<dbReference type="PAN-GO" id="O14815">
    <property type="GO annotations" value="3 GO annotations based on evolutionary models"/>
</dbReference>
<dbReference type="PhylomeDB" id="O14815"/>
<dbReference type="TreeFam" id="TF314748"/>
<dbReference type="BRENDA" id="3.4.22.B28">
    <property type="organism ID" value="2681"/>
</dbReference>
<dbReference type="BRENDA" id="3.4.22.B29">
    <property type="organism ID" value="2681"/>
</dbReference>
<dbReference type="PathwayCommons" id="O14815"/>
<dbReference type="Reactome" id="R-HSA-1474228">
    <property type="pathway name" value="Degradation of the extracellular matrix"/>
</dbReference>
<dbReference type="BioGRID-ORCS" id="10753">
    <property type="hits" value="20 hits in 1147 CRISPR screens"/>
</dbReference>
<dbReference type="ChiTaRS" id="CAPN9">
    <property type="organism name" value="human"/>
</dbReference>
<dbReference type="EvolutionaryTrace" id="O14815"/>
<dbReference type="GeneWiki" id="CAPN9"/>
<dbReference type="GenomeRNAi" id="10753"/>
<dbReference type="Pharos" id="O14815">
    <property type="development level" value="Tbio"/>
</dbReference>
<dbReference type="PRO" id="PR:O14815"/>
<dbReference type="Proteomes" id="UP000005640">
    <property type="component" value="Chromosome 1"/>
</dbReference>
<dbReference type="RNAct" id="O14815">
    <property type="molecule type" value="protein"/>
</dbReference>
<dbReference type="Bgee" id="ENSG00000135773">
    <property type="expression patterns" value="Expressed in C1 segment of cervical spinal cord and 101 other cell types or tissues"/>
</dbReference>
<dbReference type="ExpressionAtlas" id="O14815">
    <property type="expression patterns" value="baseline and differential"/>
</dbReference>
<dbReference type="GO" id="GO:0005737">
    <property type="term" value="C:cytoplasm"/>
    <property type="evidence" value="ECO:0000318"/>
    <property type="project" value="GO_Central"/>
</dbReference>
<dbReference type="GO" id="GO:0005509">
    <property type="term" value="F:calcium ion binding"/>
    <property type="evidence" value="ECO:0000304"/>
    <property type="project" value="ProtInc"/>
</dbReference>
<dbReference type="GO" id="GO:0004198">
    <property type="term" value="F:calcium-dependent cysteine-type endopeptidase activity"/>
    <property type="evidence" value="ECO:0000318"/>
    <property type="project" value="GO_Central"/>
</dbReference>
<dbReference type="GO" id="GO:0007586">
    <property type="term" value="P:digestion"/>
    <property type="evidence" value="ECO:0000304"/>
    <property type="project" value="ProtInc"/>
</dbReference>
<dbReference type="GO" id="GO:0006508">
    <property type="term" value="P:proteolysis"/>
    <property type="evidence" value="ECO:0000318"/>
    <property type="project" value="GO_Central"/>
</dbReference>
<dbReference type="CDD" id="cd00214">
    <property type="entry name" value="Calpain_III"/>
    <property type="match status" value="1"/>
</dbReference>
<dbReference type="CDD" id="cd00044">
    <property type="entry name" value="CysPc"/>
    <property type="match status" value="1"/>
</dbReference>
<dbReference type="CDD" id="cd16192">
    <property type="entry name" value="EFh_PEF_CAPN9"/>
    <property type="match status" value="1"/>
</dbReference>
<dbReference type="FunFam" id="1.10.238.10:FF:000151">
    <property type="entry name" value="Calpain 9"/>
    <property type="match status" value="1"/>
</dbReference>
<dbReference type="FunFam" id="2.60.120.380:FF:000001">
    <property type="entry name" value="Calpain-1 catalytic subunit"/>
    <property type="match status" value="1"/>
</dbReference>
<dbReference type="FunFam" id="3.90.70.10:FF:000001">
    <property type="entry name" value="Calpain-1 catalytic subunit"/>
    <property type="match status" value="1"/>
</dbReference>
<dbReference type="Gene3D" id="2.60.120.380">
    <property type="match status" value="1"/>
</dbReference>
<dbReference type="Gene3D" id="3.90.70.10">
    <property type="entry name" value="Cysteine proteinases"/>
    <property type="match status" value="1"/>
</dbReference>
<dbReference type="Gene3D" id="1.10.238.10">
    <property type="entry name" value="EF-hand"/>
    <property type="match status" value="1"/>
</dbReference>
<dbReference type="InterPro" id="IPR033883">
    <property type="entry name" value="C2_III"/>
</dbReference>
<dbReference type="InterPro" id="IPR022684">
    <property type="entry name" value="Calpain_cysteine_protease"/>
</dbReference>
<dbReference type="InterPro" id="IPR022682">
    <property type="entry name" value="Calpain_domain_III"/>
</dbReference>
<dbReference type="InterPro" id="IPR022683">
    <property type="entry name" value="Calpain_III"/>
</dbReference>
<dbReference type="InterPro" id="IPR036213">
    <property type="entry name" value="Calpain_III_sf"/>
</dbReference>
<dbReference type="InterPro" id="IPR011992">
    <property type="entry name" value="EF-hand-dom_pair"/>
</dbReference>
<dbReference type="InterPro" id="IPR018247">
    <property type="entry name" value="EF_Hand_1_Ca_BS"/>
</dbReference>
<dbReference type="InterPro" id="IPR002048">
    <property type="entry name" value="EF_hand_dom"/>
</dbReference>
<dbReference type="InterPro" id="IPR038765">
    <property type="entry name" value="Papain-like_cys_pep_sf"/>
</dbReference>
<dbReference type="InterPro" id="IPR000169">
    <property type="entry name" value="Pept_cys_AS"/>
</dbReference>
<dbReference type="InterPro" id="IPR001300">
    <property type="entry name" value="Peptidase_C2_calpain_cat"/>
</dbReference>
<dbReference type="PANTHER" id="PTHR10183">
    <property type="entry name" value="CALPAIN"/>
    <property type="match status" value="1"/>
</dbReference>
<dbReference type="PANTHER" id="PTHR10183:SF385">
    <property type="entry name" value="CALPAIN-9"/>
    <property type="match status" value="1"/>
</dbReference>
<dbReference type="Pfam" id="PF01067">
    <property type="entry name" value="Calpain_III"/>
    <property type="match status" value="1"/>
</dbReference>
<dbReference type="Pfam" id="PF13833">
    <property type="entry name" value="EF-hand_8"/>
    <property type="match status" value="1"/>
</dbReference>
<dbReference type="Pfam" id="PF00648">
    <property type="entry name" value="Peptidase_C2"/>
    <property type="match status" value="1"/>
</dbReference>
<dbReference type="PRINTS" id="PR00704">
    <property type="entry name" value="CALPAIN"/>
</dbReference>
<dbReference type="SMART" id="SM00720">
    <property type="entry name" value="calpain_III"/>
    <property type="match status" value="1"/>
</dbReference>
<dbReference type="SMART" id="SM00230">
    <property type="entry name" value="CysPc"/>
    <property type="match status" value="1"/>
</dbReference>
<dbReference type="SMART" id="SM00054">
    <property type="entry name" value="EFh"/>
    <property type="match status" value="2"/>
</dbReference>
<dbReference type="SUPFAM" id="SSF49758">
    <property type="entry name" value="Calpain large subunit, middle domain (domain III)"/>
    <property type="match status" value="1"/>
</dbReference>
<dbReference type="SUPFAM" id="SSF54001">
    <property type="entry name" value="Cysteine proteinases"/>
    <property type="match status" value="1"/>
</dbReference>
<dbReference type="SUPFAM" id="SSF47473">
    <property type="entry name" value="EF-hand"/>
    <property type="match status" value="1"/>
</dbReference>
<dbReference type="PROSITE" id="PS50203">
    <property type="entry name" value="CALPAIN_CAT"/>
    <property type="match status" value="1"/>
</dbReference>
<dbReference type="PROSITE" id="PS00018">
    <property type="entry name" value="EF_HAND_1"/>
    <property type="match status" value="2"/>
</dbReference>
<dbReference type="PROSITE" id="PS50222">
    <property type="entry name" value="EF_HAND_2"/>
    <property type="match status" value="3"/>
</dbReference>
<dbReference type="PROSITE" id="PS00139">
    <property type="entry name" value="THIOL_PROTEASE_CYS"/>
    <property type="match status" value="1"/>
</dbReference>
<comment type="function">
    <text>Calcium-regulated non-lysosomal thiol-protease.</text>
</comment>
<comment type="alternative products">
    <event type="alternative splicing"/>
    <isoform>
        <id>O14815-1</id>
        <name>1</name>
        <sequence type="displayed"/>
    </isoform>
    <isoform>
        <id>O14815-2</id>
        <name>2</name>
        <name>CG36</name>
        <sequence type="described" ref="VSP_007553"/>
    </isoform>
</comment>
<comment type="tissue specificity">
    <text>Expressed predominantly in stomach.</text>
</comment>
<comment type="induction">
    <text>Down-regulated in gastric cancer tissue and in gastric cell lines of differentiated and poorly differentiated types.</text>
</comment>
<comment type="similarity">
    <text evidence="7">Belongs to the peptidase C2 family.</text>
</comment>
<sequence length="690" mass="79097">MPYLYRAPGPQAHPVPKDARITHSSGQSFEQMRQECLQRGTLFEDADFPASNSSLFYSERPQIPFVWKRPGEIVKNPEFILGGATRTDICQGELGDCWLLAAIASLTLNQKALARVIPQDQSFGPGYAGIFHFQFWQHSEWLDVVIDDRLPTFRDRLVFLHSADHNEFWSALLEKAYAKLNGSYEALKGGSAIEAMEDFTGGVAETFQTKEAPENFYEILEKALKRGSLLGCFIDTRSAAESEARTPFGLIKGHAYSVTGIDQVSFRGQRIELIRIRNPWGQVEWNGSWSDSSPEWRSVGPAEQKRLCHTALDDGEFWMAFKDFKAHFDKVEICNLTPDALEEDAIHKWEVTVHQGSWVRGSTAGGCRNFLDTFWTNPQIKLSLTEKDEGQEECSFLVALMQKDRRKLKRFGANVLTIGYAIYECPDKDEHLNKDFFRYHASRARSKTFINLREVSDRFKLPPGEYILIPSTFEPHQEADFCLRIFSEKKAITRDMDGNVDIDLPEPPKPTPPDQETEEEQRFRALFEQVAGEDMEVTAEELEYVLNAVLQKKKDIKFKKLSLISCKNIISLMDTSGNGKLEFDEFKVFWDKLKQWINLFLRFDADKSGTMSTYELRTALKAAGFQLSSHLLQLIVLRYADEELQLDFDDFLNCLVRLENASRVFQALSTKNKEFIHLNINEFIHLTMNI</sequence>